<sequence length="425" mass="47214">MAAKWEKLEGNVGVLTIEVDAKEVNNSIDAAFKKVVKTINVPGFRKGKMPRPLFEQRFGIESLYQDALDIILPKAYGEAIDEAGIFPVAHPEIDIEKFEKNANLIFTAKVTVKPEVKLGEYKGLAVEKVETTVTDEDVENELKSLQERQAELVVKEEGTVENGDTAVIDFEGFVDGEAFEGGKGENYSLAIGSGTFIPGFEEQVIGLKSGESKDVEVSFPEEYHAAELAGKPATFKVTVHEIKTKELPELNDEFAKEADEAVATLDELKAKLRTNLEEGKKHEAEHKVRDEVVELAAANAEIDIPEAMIDTELDRMVREFEQRLSQQGMNLELYYQFTGTDADKLKEQMKEDAQKRVRINLVLEAIIEAENIEVTEEEVTAEVEKMAEMYGMPVDAIKQALGSVDALAEDLKVRKAVDFLVENAA</sequence>
<keyword id="KW-0131">Cell cycle</keyword>
<keyword id="KW-0132">Cell division</keyword>
<keyword id="KW-0143">Chaperone</keyword>
<keyword id="KW-0963">Cytoplasm</keyword>
<keyword id="KW-0413">Isomerase</keyword>
<keyword id="KW-0697">Rotamase</keyword>
<proteinExistence type="inferred from homology"/>
<protein>
    <recommendedName>
        <fullName evidence="1">Trigger factor</fullName>
        <shortName evidence="1">TF</shortName>
        <ecNumber evidence="1">5.2.1.8</ecNumber>
    </recommendedName>
    <alternativeName>
        <fullName evidence="1">PPIase</fullName>
    </alternativeName>
</protein>
<name>TIG_BACAA</name>
<evidence type="ECO:0000255" key="1">
    <source>
        <dbReference type="HAMAP-Rule" id="MF_00303"/>
    </source>
</evidence>
<accession>C3P9F8</accession>
<dbReference type="EC" id="5.2.1.8" evidence="1"/>
<dbReference type="EMBL" id="CP001598">
    <property type="protein sequence ID" value="ACQ50719.1"/>
    <property type="molecule type" value="Genomic_DNA"/>
</dbReference>
<dbReference type="RefSeq" id="WP_000729253.1">
    <property type="nucleotide sequence ID" value="NC_012659.1"/>
</dbReference>
<dbReference type="SMR" id="C3P9F8"/>
<dbReference type="GeneID" id="45024345"/>
<dbReference type="KEGG" id="bai:BAA_4723"/>
<dbReference type="HOGENOM" id="CLU_033058_3_2_9"/>
<dbReference type="GO" id="GO:0005737">
    <property type="term" value="C:cytoplasm"/>
    <property type="evidence" value="ECO:0007669"/>
    <property type="project" value="UniProtKB-SubCell"/>
</dbReference>
<dbReference type="GO" id="GO:0003755">
    <property type="term" value="F:peptidyl-prolyl cis-trans isomerase activity"/>
    <property type="evidence" value="ECO:0007669"/>
    <property type="project" value="UniProtKB-UniRule"/>
</dbReference>
<dbReference type="GO" id="GO:0044183">
    <property type="term" value="F:protein folding chaperone"/>
    <property type="evidence" value="ECO:0007669"/>
    <property type="project" value="TreeGrafter"/>
</dbReference>
<dbReference type="GO" id="GO:0043022">
    <property type="term" value="F:ribosome binding"/>
    <property type="evidence" value="ECO:0007669"/>
    <property type="project" value="TreeGrafter"/>
</dbReference>
<dbReference type="GO" id="GO:0051083">
    <property type="term" value="P:'de novo' cotranslational protein folding"/>
    <property type="evidence" value="ECO:0007669"/>
    <property type="project" value="TreeGrafter"/>
</dbReference>
<dbReference type="GO" id="GO:0051301">
    <property type="term" value="P:cell division"/>
    <property type="evidence" value="ECO:0007669"/>
    <property type="project" value="UniProtKB-KW"/>
</dbReference>
<dbReference type="GO" id="GO:0061077">
    <property type="term" value="P:chaperone-mediated protein folding"/>
    <property type="evidence" value="ECO:0007669"/>
    <property type="project" value="TreeGrafter"/>
</dbReference>
<dbReference type="GO" id="GO:0015031">
    <property type="term" value="P:protein transport"/>
    <property type="evidence" value="ECO:0007669"/>
    <property type="project" value="UniProtKB-UniRule"/>
</dbReference>
<dbReference type="GO" id="GO:0043335">
    <property type="term" value="P:protein unfolding"/>
    <property type="evidence" value="ECO:0007669"/>
    <property type="project" value="TreeGrafter"/>
</dbReference>
<dbReference type="FunFam" id="3.10.50.40:FF:000001">
    <property type="entry name" value="Trigger factor"/>
    <property type="match status" value="1"/>
</dbReference>
<dbReference type="FunFam" id="3.30.70.1050:FF:000002">
    <property type="entry name" value="Trigger factor"/>
    <property type="match status" value="1"/>
</dbReference>
<dbReference type="Gene3D" id="3.10.50.40">
    <property type="match status" value="1"/>
</dbReference>
<dbReference type="Gene3D" id="3.30.70.1050">
    <property type="entry name" value="Trigger factor ribosome-binding domain"/>
    <property type="match status" value="1"/>
</dbReference>
<dbReference type="Gene3D" id="1.10.3120.10">
    <property type="entry name" value="Trigger factor, C-terminal domain"/>
    <property type="match status" value="1"/>
</dbReference>
<dbReference type="HAMAP" id="MF_00303">
    <property type="entry name" value="Trigger_factor_Tig"/>
    <property type="match status" value="1"/>
</dbReference>
<dbReference type="InterPro" id="IPR046357">
    <property type="entry name" value="PPIase_dom_sf"/>
</dbReference>
<dbReference type="InterPro" id="IPR001179">
    <property type="entry name" value="PPIase_FKBP_dom"/>
</dbReference>
<dbReference type="InterPro" id="IPR005215">
    <property type="entry name" value="Trig_fac"/>
</dbReference>
<dbReference type="InterPro" id="IPR008880">
    <property type="entry name" value="Trigger_fac_C"/>
</dbReference>
<dbReference type="InterPro" id="IPR037041">
    <property type="entry name" value="Trigger_fac_C_sf"/>
</dbReference>
<dbReference type="InterPro" id="IPR008881">
    <property type="entry name" value="Trigger_fac_ribosome-bd_bac"/>
</dbReference>
<dbReference type="InterPro" id="IPR036611">
    <property type="entry name" value="Trigger_fac_ribosome-bd_sf"/>
</dbReference>
<dbReference type="InterPro" id="IPR027304">
    <property type="entry name" value="Trigger_fact/SurA_dom_sf"/>
</dbReference>
<dbReference type="NCBIfam" id="TIGR00115">
    <property type="entry name" value="tig"/>
    <property type="match status" value="1"/>
</dbReference>
<dbReference type="PANTHER" id="PTHR30560">
    <property type="entry name" value="TRIGGER FACTOR CHAPERONE AND PEPTIDYL-PROLYL CIS/TRANS ISOMERASE"/>
    <property type="match status" value="1"/>
</dbReference>
<dbReference type="PANTHER" id="PTHR30560:SF3">
    <property type="entry name" value="TRIGGER FACTOR-LIKE PROTEIN TIG, CHLOROPLASTIC"/>
    <property type="match status" value="1"/>
</dbReference>
<dbReference type="Pfam" id="PF00254">
    <property type="entry name" value="FKBP_C"/>
    <property type="match status" value="1"/>
</dbReference>
<dbReference type="Pfam" id="PF05698">
    <property type="entry name" value="Trigger_C"/>
    <property type="match status" value="1"/>
</dbReference>
<dbReference type="Pfam" id="PF05697">
    <property type="entry name" value="Trigger_N"/>
    <property type="match status" value="1"/>
</dbReference>
<dbReference type="PIRSF" id="PIRSF003095">
    <property type="entry name" value="Trigger_factor"/>
    <property type="match status" value="1"/>
</dbReference>
<dbReference type="SUPFAM" id="SSF54534">
    <property type="entry name" value="FKBP-like"/>
    <property type="match status" value="1"/>
</dbReference>
<dbReference type="SUPFAM" id="SSF109998">
    <property type="entry name" value="Triger factor/SurA peptide-binding domain-like"/>
    <property type="match status" value="1"/>
</dbReference>
<dbReference type="SUPFAM" id="SSF102735">
    <property type="entry name" value="Trigger factor ribosome-binding domain"/>
    <property type="match status" value="1"/>
</dbReference>
<dbReference type="PROSITE" id="PS50059">
    <property type="entry name" value="FKBP_PPIASE"/>
    <property type="match status" value="1"/>
</dbReference>
<gene>
    <name evidence="1" type="primary">tig</name>
    <name type="ordered locus">BAA_4723</name>
</gene>
<comment type="function">
    <text evidence="1">Involved in protein export. Acts as a chaperone by maintaining the newly synthesized protein in an open conformation. Functions as a peptidyl-prolyl cis-trans isomerase.</text>
</comment>
<comment type="catalytic activity">
    <reaction evidence="1">
        <text>[protein]-peptidylproline (omega=180) = [protein]-peptidylproline (omega=0)</text>
        <dbReference type="Rhea" id="RHEA:16237"/>
        <dbReference type="Rhea" id="RHEA-COMP:10747"/>
        <dbReference type="Rhea" id="RHEA-COMP:10748"/>
        <dbReference type="ChEBI" id="CHEBI:83833"/>
        <dbReference type="ChEBI" id="CHEBI:83834"/>
        <dbReference type="EC" id="5.2.1.8"/>
    </reaction>
</comment>
<comment type="subcellular location">
    <subcellularLocation>
        <location>Cytoplasm</location>
    </subcellularLocation>
    <text evidence="1">About half TF is bound to the ribosome near the polypeptide exit tunnel while the other half is free in the cytoplasm.</text>
</comment>
<comment type="domain">
    <text evidence="1">Consists of 3 domains; the N-terminus binds the ribosome, the middle domain has PPIase activity, while the C-terminus has intrinsic chaperone activity on its own.</text>
</comment>
<comment type="similarity">
    <text evidence="1">Belongs to the FKBP-type PPIase family. Tig subfamily.</text>
</comment>
<feature type="chain" id="PRO_1000198139" description="Trigger factor">
    <location>
        <begin position="1"/>
        <end position="425"/>
    </location>
</feature>
<feature type="domain" description="PPIase FKBP-type" evidence="1">
    <location>
        <begin position="163"/>
        <end position="248"/>
    </location>
</feature>
<reference key="1">
    <citation type="submission" date="2009-04" db="EMBL/GenBank/DDBJ databases">
        <title>Genome sequence of Bacillus anthracis A0248.</title>
        <authorList>
            <person name="Dodson R.J."/>
            <person name="Munk A.C."/>
            <person name="Bruce D."/>
            <person name="Detter C."/>
            <person name="Tapia R."/>
            <person name="Sutton G."/>
            <person name="Sims D."/>
            <person name="Brettin T."/>
        </authorList>
    </citation>
    <scope>NUCLEOTIDE SEQUENCE [LARGE SCALE GENOMIC DNA]</scope>
    <source>
        <strain>A0248</strain>
    </source>
</reference>
<organism>
    <name type="scientific">Bacillus anthracis (strain A0248)</name>
    <dbReference type="NCBI Taxonomy" id="592021"/>
    <lineage>
        <taxon>Bacteria</taxon>
        <taxon>Bacillati</taxon>
        <taxon>Bacillota</taxon>
        <taxon>Bacilli</taxon>
        <taxon>Bacillales</taxon>
        <taxon>Bacillaceae</taxon>
        <taxon>Bacillus</taxon>
        <taxon>Bacillus cereus group</taxon>
    </lineage>
</organism>